<organism>
    <name type="scientific">Mycobacterium bovis (strain BCG / Pasteur 1173P2)</name>
    <dbReference type="NCBI Taxonomy" id="410289"/>
    <lineage>
        <taxon>Bacteria</taxon>
        <taxon>Bacillati</taxon>
        <taxon>Actinomycetota</taxon>
        <taxon>Actinomycetes</taxon>
        <taxon>Mycobacteriales</taxon>
        <taxon>Mycobacteriaceae</taxon>
        <taxon>Mycobacterium</taxon>
        <taxon>Mycobacterium tuberculosis complex</taxon>
    </lineage>
</organism>
<name>MQO_MYCBP</name>
<feature type="chain" id="PRO_1000023807" description="Probable malate:quinone oxidoreductase">
    <location>
        <begin position="1"/>
        <end position="493"/>
    </location>
</feature>
<dbReference type="EC" id="1.1.5.4" evidence="1"/>
<dbReference type="EMBL" id="AM408590">
    <property type="protein sequence ID" value="CAL72861.1"/>
    <property type="molecule type" value="Genomic_DNA"/>
</dbReference>
<dbReference type="RefSeq" id="WP_003414545.1">
    <property type="nucleotide sequence ID" value="NC_008769.1"/>
</dbReference>
<dbReference type="SMR" id="A1KMJ5"/>
<dbReference type="GeneID" id="45426839"/>
<dbReference type="KEGG" id="mbb:BCG_2872c"/>
<dbReference type="HOGENOM" id="CLU_028151_0_0_11"/>
<dbReference type="UniPathway" id="UPA00223">
    <property type="reaction ID" value="UER01008"/>
</dbReference>
<dbReference type="Proteomes" id="UP000001472">
    <property type="component" value="Chromosome"/>
</dbReference>
<dbReference type="GO" id="GO:0047545">
    <property type="term" value="F:2-hydroxyglutarate dehydrogenase activity"/>
    <property type="evidence" value="ECO:0007669"/>
    <property type="project" value="TreeGrafter"/>
</dbReference>
<dbReference type="GO" id="GO:0008924">
    <property type="term" value="F:L-malate dehydrogenase (quinone) activity"/>
    <property type="evidence" value="ECO:0007669"/>
    <property type="project" value="UniProtKB-UniRule"/>
</dbReference>
<dbReference type="GO" id="GO:0006099">
    <property type="term" value="P:tricarboxylic acid cycle"/>
    <property type="evidence" value="ECO:0007669"/>
    <property type="project" value="UniProtKB-UniRule"/>
</dbReference>
<dbReference type="Gene3D" id="3.30.9.10">
    <property type="entry name" value="D-Amino Acid Oxidase, subunit A, domain 2"/>
    <property type="match status" value="1"/>
</dbReference>
<dbReference type="Gene3D" id="3.50.50.60">
    <property type="entry name" value="FAD/NAD(P)-binding domain"/>
    <property type="match status" value="1"/>
</dbReference>
<dbReference type="HAMAP" id="MF_00212">
    <property type="entry name" value="MQO"/>
    <property type="match status" value="1"/>
</dbReference>
<dbReference type="InterPro" id="IPR036188">
    <property type="entry name" value="FAD/NAD-bd_sf"/>
</dbReference>
<dbReference type="InterPro" id="IPR006231">
    <property type="entry name" value="MQO"/>
</dbReference>
<dbReference type="NCBIfam" id="TIGR01320">
    <property type="entry name" value="mal_quin_oxido"/>
    <property type="match status" value="1"/>
</dbReference>
<dbReference type="NCBIfam" id="NF003606">
    <property type="entry name" value="PRK05257.2-1"/>
    <property type="match status" value="1"/>
</dbReference>
<dbReference type="NCBIfam" id="NF003611">
    <property type="entry name" value="PRK05257.3-2"/>
    <property type="match status" value="1"/>
</dbReference>
<dbReference type="PANTHER" id="PTHR43104">
    <property type="entry name" value="L-2-HYDROXYGLUTARATE DEHYDROGENASE, MITOCHONDRIAL"/>
    <property type="match status" value="1"/>
</dbReference>
<dbReference type="PANTHER" id="PTHR43104:SF2">
    <property type="entry name" value="L-2-HYDROXYGLUTARATE DEHYDROGENASE, MITOCHONDRIAL"/>
    <property type="match status" value="1"/>
</dbReference>
<dbReference type="Pfam" id="PF06039">
    <property type="entry name" value="Mqo"/>
    <property type="match status" value="1"/>
</dbReference>
<dbReference type="SUPFAM" id="SSF51905">
    <property type="entry name" value="FAD/NAD(P)-binding domain"/>
    <property type="match status" value="1"/>
</dbReference>
<reference key="1">
    <citation type="journal article" date="2007" name="Proc. Natl. Acad. Sci. U.S.A.">
        <title>Genome plasticity of BCG and impact on vaccine efficacy.</title>
        <authorList>
            <person name="Brosch R."/>
            <person name="Gordon S.V."/>
            <person name="Garnier T."/>
            <person name="Eiglmeier K."/>
            <person name="Frigui W."/>
            <person name="Valenti P."/>
            <person name="Dos Santos S."/>
            <person name="Duthoy S."/>
            <person name="Lacroix C."/>
            <person name="Garcia-Pelayo C."/>
            <person name="Inwald J.K."/>
            <person name="Golby P."/>
            <person name="Garcia J.N."/>
            <person name="Hewinson R.G."/>
            <person name="Behr M.A."/>
            <person name="Quail M.A."/>
            <person name="Churcher C."/>
            <person name="Barrell B.G."/>
            <person name="Parkhill J."/>
            <person name="Cole S.T."/>
        </authorList>
    </citation>
    <scope>NUCLEOTIDE SEQUENCE [LARGE SCALE GENOMIC DNA]</scope>
    <source>
        <strain>BCG / Pasteur 1173P2</strain>
    </source>
</reference>
<gene>
    <name evidence="1" type="primary">mqo</name>
    <name type="ordered locus">BCG_2872c</name>
</gene>
<sequence>MSDLARTDVVLIGAGIMSATLGVLLRRLEPNWSITLIERLDAVAAESSGPWNNAGTGHSALCEMNYTPEMPDGSIDITKAVRVNEQFQVTRQFWAYAAENGILTDVRSFLNPVPHVSFVHGSRGVEYLRRRQKALAGNPLFAGTEFIESPDEFARRLPFMAAKRAFSEPVALNWAADGTDVDFGALAKQLIGYCVQNGTTALFGHEVRNLSRQSDGSWTVTMCNRRTGEKRKLNTKFVFVGAGGDTLPVLQKSGIKEVKGFAGFPIGGRFLRAGNPALTASHRAKVYGFPAPGAPPLGALHLDLRFVNGKSWLVFGPYAGWSPKFLKHGQISDLPRSIRPDNLLSVLGVGLTERRLLNYLISQLRLSEPERVSALREFAPSAIDSDWELTIAGQRVQVIRRDERNGGVLEFGTTVIGDADGSIAGLLGGSPGASTAVAIMLDVLQKCFANRYQSWLPTLKEMVPSLGVQLSNEPALFDEVWSWSTKALKLGAA</sequence>
<evidence type="ECO:0000255" key="1">
    <source>
        <dbReference type="HAMAP-Rule" id="MF_00212"/>
    </source>
</evidence>
<proteinExistence type="inferred from homology"/>
<keyword id="KW-0274">FAD</keyword>
<keyword id="KW-0285">Flavoprotein</keyword>
<keyword id="KW-0560">Oxidoreductase</keyword>
<keyword id="KW-0816">Tricarboxylic acid cycle</keyword>
<comment type="catalytic activity">
    <reaction evidence="1">
        <text>(S)-malate + a quinone = a quinol + oxaloacetate</text>
        <dbReference type="Rhea" id="RHEA:46012"/>
        <dbReference type="ChEBI" id="CHEBI:15589"/>
        <dbReference type="ChEBI" id="CHEBI:16452"/>
        <dbReference type="ChEBI" id="CHEBI:24646"/>
        <dbReference type="ChEBI" id="CHEBI:132124"/>
        <dbReference type="EC" id="1.1.5.4"/>
    </reaction>
</comment>
<comment type="cofactor">
    <cofactor evidence="1">
        <name>FAD</name>
        <dbReference type="ChEBI" id="CHEBI:57692"/>
    </cofactor>
</comment>
<comment type="pathway">
    <text evidence="1">Carbohydrate metabolism; tricarboxylic acid cycle; oxaloacetate from (S)-malate (quinone route): step 1/1.</text>
</comment>
<comment type="similarity">
    <text evidence="1">Belongs to the MQO family.</text>
</comment>
<protein>
    <recommendedName>
        <fullName evidence="1">Probable malate:quinone oxidoreductase</fullName>
        <ecNumber evidence="1">1.1.5.4</ecNumber>
    </recommendedName>
    <alternativeName>
        <fullName evidence="1">MQO</fullName>
    </alternativeName>
    <alternativeName>
        <fullName evidence="1">Malate dehydrogenase [quinone]</fullName>
    </alternativeName>
</protein>
<accession>A1KMJ5</accession>